<name>PHS_BRADU</name>
<accession>Q89WZ6</accession>
<gene>
    <name type="ordered locus">bll0532</name>
</gene>
<reference key="1">
    <citation type="journal article" date="2002" name="DNA Res.">
        <title>Complete genomic sequence of nitrogen-fixing symbiotic bacterium Bradyrhizobium japonicum USDA110.</title>
        <authorList>
            <person name="Kaneko T."/>
            <person name="Nakamura Y."/>
            <person name="Sato S."/>
            <person name="Minamisawa K."/>
            <person name="Uchiumi T."/>
            <person name="Sasamoto S."/>
            <person name="Watanabe A."/>
            <person name="Idesawa K."/>
            <person name="Iriguchi M."/>
            <person name="Kawashima K."/>
            <person name="Kohara M."/>
            <person name="Matsumoto M."/>
            <person name="Shimpo S."/>
            <person name="Tsuruoka H."/>
            <person name="Wada T."/>
            <person name="Yamada M."/>
            <person name="Tabata S."/>
        </authorList>
    </citation>
    <scope>NUCLEOTIDE SEQUENCE [LARGE SCALE GENOMIC DNA]</scope>
    <source>
        <strain>JCM 10833 / BCRC 13528 / IAM 13628 / NBRC 14792 / USDA 110</strain>
    </source>
</reference>
<evidence type="ECO:0000255" key="1">
    <source>
        <dbReference type="HAMAP-Rule" id="MF_00434"/>
    </source>
</evidence>
<sequence>MAERLTTEARKQALGGIPDWTEVSGRDAIGKTFVFKDFNEAFGFMTRAALVAEKMDHHPEWRNVYKTVEVVLSTHDAGGVTALDIELARAMNAIAKLTPG</sequence>
<protein>
    <recommendedName>
        <fullName evidence="1">Putative pterin-4-alpha-carbinolamine dehydratase</fullName>
        <shortName evidence="1">PHS</shortName>
        <ecNumber evidence="1">4.2.1.96</ecNumber>
    </recommendedName>
    <alternativeName>
        <fullName evidence="1">4-alpha-hydroxy-tetrahydropterin dehydratase</fullName>
    </alternativeName>
    <alternativeName>
        <fullName evidence="1">Pterin carbinolamine dehydratase</fullName>
        <shortName evidence="1">PCD</shortName>
    </alternativeName>
</protein>
<comment type="catalytic activity">
    <reaction evidence="1">
        <text>(4aS,6R)-4a-hydroxy-L-erythro-5,6,7,8-tetrahydrobiopterin = (6R)-L-erythro-6,7-dihydrobiopterin + H2O</text>
        <dbReference type="Rhea" id="RHEA:11920"/>
        <dbReference type="ChEBI" id="CHEBI:15377"/>
        <dbReference type="ChEBI" id="CHEBI:15642"/>
        <dbReference type="ChEBI" id="CHEBI:43120"/>
        <dbReference type="EC" id="4.2.1.96"/>
    </reaction>
</comment>
<comment type="similarity">
    <text evidence="1">Belongs to the pterin-4-alpha-carbinolamine dehydratase family.</text>
</comment>
<proteinExistence type="inferred from homology"/>
<keyword id="KW-0456">Lyase</keyword>
<keyword id="KW-1185">Reference proteome</keyword>
<feature type="chain" id="PRO_0000063075" description="Putative pterin-4-alpha-carbinolamine dehydratase">
    <location>
        <begin position="1"/>
        <end position="100"/>
    </location>
</feature>
<organism>
    <name type="scientific">Bradyrhizobium diazoefficiens (strain JCM 10833 / BCRC 13528 / IAM 13628 / NBRC 14792 / USDA 110)</name>
    <dbReference type="NCBI Taxonomy" id="224911"/>
    <lineage>
        <taxon>Bacteria</taxon>
        <taxon>Pseudomonadati</taxon>
        <taxon>Pseudomonadota</taxon>
        <taxon>Alphaproteobacteria</taxon>
        <taxon>Hyphomicrobiales</taxon>
        <taxon>Nitrobacteraceae</taxon>
        <taxon>Bradyrhizobium</taxon>
    </lineage>
</organism>
<dbReference type="EC" id="4.2.1.96" evidence="1"/>
<dbReference type="EMBL" id="BA000040">
    <property type="protein sequence ID" value="BAC45797.1"/>
    <property type="molecule type" value="Genomic_DNA"/>
</dbReference>
<dbReference type="RefSeq" id="NP_767172.1">
    <property type="nucleotide sequence ID" value="NC_004463.1"/>
</dbReference>
<dbReference type="RefSeq" id="WP_011083363.1">
    <property type="nucleotide sequence ID" value="NC_004463.1"/>
</dbReference>
<dbReference type="SMR" id="Q89WZ6"/>
<dbReference type="STRING" id="224911.AAV28_41925"/>
<dbReference type="EnsemblBacteria" id="BAC45797">
    <property type="protein sequence ID" value="BAC45797"/>
    <property type="gene ID" value="BAC45797"/>
</dbReference>
<dbReference type="GeneID" id="46495676"/>
<dbReference type="KEGG" id="bja:bll0532"/>
<dbReference type="PATRIC" id="fig|224911.44.peg.9073"/>
<dbReference type="eggNOG" id="COG2154">
    <property type="taxonomic scope" value="Bacteria"/>
</dbReference>
<dbReference type="HOGENOM" id="CLU_081974_3_2_5"/>
<dbReference type="InParanoid" id="Q89WZ6"/>
<dbReference type="OrthoDB" id="9794987at2"/>
<dbReference type="PhylomeDB" id="Q89WZ6"/>
<dbReference type="Proteomes" id="UP000002526">
    <property type="component" value="Chromosome"/>
</dbReference>
<dbReference type="GO" id="GO:0008124">
    <property type="term" value="F:4-alpha-hydroxytetrahydrobiopterin dehydratase activity"/>
    <property type="evidence" value="ECO:0000318"/>
    <property type="project" value="GO_Central"/>
</dbReference>
<dbReference type="GO" id="GO:0006729">
    <property type="term" value="P:tetrahydrobiopterin biosynthetic process"/>
    <property type="evidence" value="ECO:0007669"/>
    <property type="project" value="InterPro"/>
</dbReference>
<dbReference type="CDD" id="cd00914">
    <property type="entry name" value="PCD_DCoH_subfamily_b"/>
    <property type="match status" value="1"/>
</dbReference>
<dbReference type="Gene3D" id="3.30.1360.20">
    <property type="entry name" value="Transcriptional coactivator/pterin dehydratase"/>
    <property type="match status" value="1"/>
</dbReference>
<dbReference type="HAMAP" id="MF_00434">
    <property type="entry name" value="Pterin_4_alpha"/>
    <property type="match status" value="1"/>
</dbReference>
<dbReference type="InterPro" id="IPR036428">
    <property type="entry name" value="PCD_sf"/>
</dbReference>
<dbReference type="InterPro" id="IPR001533">
    <property type="entry name" value="Pterin_deHydtase"/>
</dbReference>
<dbReference type="NCBIfam" id="NF002018">
    <property type="entry name" value="PRK00823.1-3"/>
    <property type="match status" value="1"/>
</dbReference>
<dbReference type="NCBIfam" id="NF002020">
    <property type="entry name" value="PRK00823.1-5"/>
    <property type="match status" value="1"/>
</dbReference>
<dbReference type="PANTHER" id="PTHR12599">
    <property type="entry name" value="PTERIN-4-ALPHA-CARBINOLAMINE DEHYDRATASE"/>
    <property type="match status" value="1"/>
</dbReference>
<dbReference type="PANTHER" id="PTHR12599:SF0">
    <property type="entry name" value="PTERIN-4-ALPHA-CARBINOLAMINE DEHYDRATASE"/>
    <property type="match status" value="1"/>
</dbReference>
<dbReference type="Pfam" id="PF01329">
    <property type="entry name" value="Pterin_4a"/>
    <property type="match status" value="1"/>
</dbReference>
<dbReference type="SUPFAM" id="SSF55248">
    <property type="entry name" value="PCD-like"/>
    <property type="match status" value="1"/>
</dbReference>